<organism>
    <name type="scientific">Porphyromonas gingivalis (strain ATCC BAA-308 / W83)</name>
    <dbReference type="NCBI Taxonomy" id="242619"/>
    <lineage>
        <taxon>Bacteria</taxon>
        <taxon>Pseudomonadati</taxon>
        <taxon>Bacteroidota</taxon>
        <taxon>Bacteroidia</taxon>
        <taxon>Bacteroidales</taxon>
        <taxon>Porphyromonadaceae</taxon>
        <taxon>Porphyromonas</taxon>
    </lineage>
</organism>
<comment type="function">
    <text evidence="1">Involved in the binding of tRNA to the ribosomes.</text>
</comment>
<comment type="subunit">
    <text evidence="1">Part of the 30S ribosomal subunit.</text>
</comment>
<comment type="similarity">
    <text evidence="1">Belongs to the universal ribosomal protein uS10 family.</text>
</comment>
<accession>Q7MTL2</accession>
<feature type="chain" id="PRO_0000146573" description="Small ribosomal subunit protein uS10">
    <location>
        <begin position="1"/>
        <end position="101"/>
    </location>
</feature>
<protein>
    <recommendedName>
        <fullName evidence="1">Small ribosomal subunit protein uS10</fullName>
    </recommendedName>
    <alternativeName>
        <fullName evidence="2">30S ribosomal protein S10</fullName>
    </alternativeName>
</protein>
<proteinExistence type="inferred from homology"/>
<gene>
    <name evidence="1" type="primary">rpsJ</name>
    <name type="ordered locus">PG_1939</name>
</gene>
<keyword id="KW-1185">Reference proteome</keyword>
<keyword id="KW-0687">Ribonucleoprotein</keyword>
<keyword id="KW-0689">Ribosomal protein</keyword>
<reference key="1">
    <citation type="journal article" date="2003" name="J. Bacteriol.">
        <title>Complete genome sequence of the oral pathogenic bacterium Porphyromonas gingivalis strain W83.</title>
        <authorList>
            <person name="Nelson K.E."/>
            <person name="Fleischmann R.D."/>
            <person name="DeBoy R.T."/>
            <person name="Paulsen I.T."/>
            <person name="Fouts D.E."/>
            <person name="Eisen J.A."/>
            <person name="Daugherty S.C."/>
            <person name="Dodson R.J."/>
            <person name="Durkin A.S."/>
            <person name="Gwinn M.L."/>
            <person name="Haft D.H."/>
            <person name="Kolonay J.F."/>
            <person name="Nelson W.C."/>
            <person name="Mason T.M."/>
            <person name="Tallon L."/>
            <person name="Gray J."/>
            <person name="Granger D."/>
            <person name="Tettelin H."/>
            <person name="Dong H."/>
            <person name="Galvin J.L."/>
            <person name="Duncan M.J."/>
            <person name="Dewhirst F.E."/>
            <person name="Fraser C.M."/>
        </authorList>
    </citation>
    <scope>NUCLEOTIDE SEQUENCE [LARGE SCALE GENOMIC DNA]</scope>
    <source>
        <strain>ATCC BAA-308 / W83</strain>
    </source>
</reference>
<dbReference type="EMBL" id="AE015924">
    <property type="protein sequence ID" value="AAQ66920.1"/>
    <property type="molecule type" value="Genomic_DNA"/>
</dbReference>
<dbReference type="RefSeq" id="WP_004583599.1">
    <property type="nucleotide sequence ID" value="NC_002950.2"/>
</dbReference>
<dbReference type="SMR" id="Q7MTL2"/>
<dbReference type="STRING" id="242619.PG_1939"/>
<dbReference type="EnsemblBacteria" id="AAQ66920">
    <property type="protein sequence ID" value="AAQ66920"/>
    <property type="gene ID" value="PG_1939"/>
</dbReference>
<dbReference type="GeneID" id="94550672"/>
<dbReference type="KEGG" id="pgi:PG_1939"/>
<dbReference type="eggNOG" id="COG0051">
    <property type="taxonomic scope" value="Bacteria"/>
</dbReference>
<dbReference type="HOGENOM" id="CLU_122625_1_3_10"/>
<dbReference type="Proteomes" id="UP000000588">
    <property type="component" value="Chromosome"/>
</dbReference>
<dbReference type="GO" id="GO:1990904">
    <property type="term" value="C:ribonucleoprotein complex"/>
    <property type="evidence" value="ECO:0007669"/>
    <property type="project" value="UniProtKB-KW"/>
</dbReference>
<dbReference type="GO" id="GO:0005840">
    <property type="term" value="C:ribosome"/>
    <property type="evidence" value="ECO:0007669"/>
    <property type="project" value="UniProtKB-KW"/>
</dbReference>
<dbReference type="GO" id="GO:0003735">
    <property type="term" value="F:structural constituent of ribosome"/>
    <property type="evidence" value="ECO:0007669"/>
    <property type="project" value="InterPro"/>
</dbReference>
<dbReference type="GO" id="GO:0000049">
    <property type="term" value="F:tRNA binding"/>
    <property type="evidence" value="ECO:0007669"/>
    <property type="project" value="UniProtKB-UniRule"/>
</dbReference>
<dbReference type="GO" id="GO:0006412">
    <property type="term" value="P:translation"/>
    <property type="evidence" value="ECO:0007669"/>
    <property type="project" value="UniProtKB-UniRule"/>
</dbReference>
<dbReference type="FunFam" id="3.30.70.600:FF:000003">
    <property type="entry name" value="30S ribosomal protein S10"/>
    <property type="match status" value="1"/>
</dbReference>
<dbReference type="Gene3D" id="3.30.70.600">
    <property type="entry name" value="Ribosomal protein S10 domain"/>
    <property type="match status" value="1"/>
</dbReference>
<dbReference type="HAMAP" id="MF_00508">
    <property type="entry name" value="Ribosomal_uS10"/>
    <property type="match status" value="1"/>
</dbReference>
<dbReference type="InterPro" id="IPR001848">
    <property type="entry name" value="Ribosomal_uS10"/>
</dbReference>
<dbReference type="InterPro" id="IPR018268">
    <property type="entry name" value="Ribosomal_uS10_CS"/>
</dbReference>
<dbReference type="InterPro" id="IPR027486">
    <property type="entry name" value="Ribosomal_uS10_dom"/>
</dbReference>
<dbReference type="InterPro" id="IPR036838">
    <property type="entry name" value="Ribosomal_uS10_dom_sf"/>
</dbReference>
<dbReference type="NCBIfam" id="NF001861">
    <property type="entry name" value="PRK00596.1"/>
    <property type="match status" value="1"/>
</dbReference>
<dbReference type="NCBIfam" id="TIGR01049">
    <property type="entry name" value="rpsJ_bact"/>
    <property type="match status" value="1"/>
</dbReference>
<dbReference type="PANTHER" id="PTHR11700">
    <property type="entry name" value="30S RIBOSOMAL PROTEIN S10 FAMILY MEMBER"/>
    <property type="match status" value="1"/>
</dbReference>
<dbReference type="Pfam" id="PF00338">
    <property type="entry name" value="Ribosomal_S10"/>
    <property type="match status" value="1"/>
</dbReference>
<dbReference type="PRINTS" id="PR00971">
    <property type="entry name" value="RIBOSOMALS10"/>
</dbReference>
<dbReference type="SMART" id="SM01403">
    <property type="entry name" value="Ribosomal_S10"/>
    <property type="match status" value="1"/>
</dbReference>
<dbReference type="SUPFAM" id="SSF54999">
    <property type="entry name" value="Ribosomal protein S10"/>
    <property type="match status" value="1"/>
</dbReference>
<dbReference type="PROSITE" id="PS00361">
    <property type="entry name" value="RIBOSOMAL_S10"/>
    <property type="match status" value="1"/>
</dbReference>
<evidence type="ECO:0000255" key="1">
    <source>
        <dbReference type="HAMAP-Rule" id="MF_00508"/>
    </source>
</evidence>
<evidence type="ECO:0000305" key="2"/>
<sequence>MSQKIRIKLKSYDYMLVDKSAEKIVKTVKAAGAMVSGPIPLPTHKRIFTVNRSTFVNKKSREQFELSSYKRLIDIYNSTAKTVDALMKLELPSGVEVEIKV</sequence>
<name>RS10_PORGI</name>